<keyword id="KW-0963">Cytoplasm</keyword>
<keyword id="KW-0396">Initiation factor</keyword>
<keyword id="KW-0648">Protein biosynthesis</keyword>
<keyword id="KW-1185">Reference proteome</keyword>
<dbReference type="EMBL" id="CH408031">
    <property type="protein sequence ID" value="EAQ88915.1"/>
    <property type="molecule type" value="Genomic_DNA"/>
</dbReference>
<dbReference type="RefSeq" id="XP_001221629.1">
    <property type="nucleotide sequence ID" value="XM_001221628.1"/>
</dbReference>
<dbReference type="SMR" id="Q2H731"/>
<dbReference type="FunCoup" id="Q2H731">
    <property type="interactions" value="1057"/>
</dbReference>
<dbReference type="STRING" id="306901.Q2H731"/>
<dbReference type="GeneID" id="4391333"/>
<dbReference type="VEuPathDB" id="FungiDB:CHGG_05534"/>
<dbReference type="eggNOG" id="KOG1076">
    <property type="taxonomic scope" value="Eukaryota"/>
</dbReference>
<dbReference type="HOGENOM" id="CLU_004304_0_2_1"/>
<dbReference type="InParanoid" id="Q2H731"/>
<dbReference type="OMA" id="FRCGLIK"/>
<dbReference type="OrthoDB" id="29647at2759"/>
<dbReference type="Proteomes" id="UP000001056">
    <property type="component" value="Unassembled WGS sequence"/>
</dbReference>
<dbReference type="GO" id="GO:0016282">
    <property type="term" value="C:eukaryotic 43S preinitiation complex"/>
    <property type="evidence" value="ECO:0007669"/>
    <property type="project" value="UniProtKB-UniRule"/>
</dbReference>
<dbReference type="GO" id="GO:0033290">
    <property type="term" value="C:eukaryotic 48S preinitiation complex"/>
    <property type="evidence" value="ECO:0007669"/>
    <property type="project" value="UniProtKB-UniRule"/>
</dbReference>
<dbReference type="GO" id="GO:0071540">
    <property type="term" value="C:eukaryotic translation initiation factor 3 complex, eIF3e"/>
    <property type="evidence" value="ECO:0007669"/>
    <property type="project" value="EnsemblFungi"/>
</dbReference>
<dbReference type="GO" id="GO:0071541">
    <property type="term" value="C:eukaryotic translation initiation factor 3 complex, eIF3m"/>
    <property type="evidence" value="ECO:0007669"/>
    <property type="project" value="EnsemblFungi"/>
</dbReference>
<dbReference type="GO" id="GO:0003723">
    <property type="term" value="F:RNA binding"/>
    <property type="evidence" value="ECO:0007669"/>
    <property type="project" value="InterPro"/>
</dbReference>
<dbReference type="GO" id="GO:0003743">
    <property type="term" value="F:translation initiation factor activity"/>
    <property type="evidence" value="ECO:0007669"/>
    <property type="project" value="UniProtKB-UniRule"/>
</dbReference>
<dbReference type="GO" id="GO:0031369">
    <property type="term" value="F:translation initiation factor binding"/>
    <property type="evidence" value="ECO:0007669"/>
    <property type="project" value="InterPro"/>
</dbReference>
<dbReference type="GO" id="GO:0001732">
    <property type="term" value="P:formation of cytoplasmic translation initiation complex"/>
    <property type="evidence" value="ECO:0007669"/>
    <property type="project" value="UniProtKB-UniRule"/>
</dbReference>
<dbReference type="FunFam" id="1.10.10.10:FF:000300">
    <property type="entry name" value="Eukaryotic translation initiation factor 3 subunit C"/>
    <property type="match status" value="1"/>
</dbReference>
<dbReference type="Gene3D" id="1.10.10.10">
    <property type="entry name" value="Winged helix-like DNA-binding domain superfamily/Winged helix DNA-binding domain"/>
    <property type="match status" value="1"/>
</dbReference>
<dbReference type="HAMAP" id="MF_03002">
    <property type="entry name" value="eIF3c"/>
    <property type="match status" value="1"/>
</dbReference>
<dbReference type="InterPro" id="IPR027516">
    <property type="entry name" value="EIF3C"/>
</dbReference>
<dbReference type="InterPro" id="IPR008905">
    <property type="entry name" value="EIF3C_N_dom"/>
</dbReference>
<dbReference type="InterPro" id="IPR000717">
    <property type="entry name" value="PCI_dom"/>
</dbReference>
<dbReference type="InterPro" id="IPR036388">
    <property type="entry name" value="WH-like_DNA-bd_sf"/>
</dbReference>
<dbReference type="InterPro" id="IPR036390">
    <property type="entry name" value="WH_DNA-bd_sf"/>
</dbReference>
<dbReference type="PANTHER" id="PTHR13937">
    <property type="entry name" value="EUKARYOTIC TRANSLATION INITATION FACTOR 3, SUBUNIT 8 EIF3S8 -RELATED"/>
    <property type="match status" value="1"/>
</dbReference>
<dbReference type="PANTHER" id="PTHR13937:SF0">
    <property type="entry name" value="EUKARYOTIC TRANSLATION INITIATION FACTOR 3 SUBUNIT C-RELATED"/>
    <property type="match status" value="1"/>
</dbReference>
<dbReference type="Pfam" id="PF05470">
    <property type="entry name" value="eIF-3c_N"/>
    <property type="match status" value="1"/>
</dbReference>
<dbReference type="Pfam" id="PF01399">
    <property type="entry name" value="PCI"/>
    <property type="match status" value="1"/>
</dbReference>
<dbReference type="SMART" id="SM00088">
    <property type="entry name" value="PINT"/>
    <property type="match status" value="1"/>
</dbReference>
<dbReference type="SUPFAM" id="SSF46785">
    <property type="entry name" value="Winged helix' DNA-binding domain"/>
    <property type="match status" value="1"/>
</dbReference>
<dbReference type="PROSITE" id="PS50250">
    <property type="entry name" value="PCI"/>
    <property type="match status" value="1"/>
</dbReference>
<comment type="function">
    <text evidence="1">Component of the eukaryotic translation initiation factor 3 (eIF-3) complex, which is involved in protein synthesis of a specialized repertoire of mRNAs and, together with other initiation factors, stimulates binding of mRNA and methionyl-tRNAi to the 40S ribosome. The eIF-3 complex specifically targets and initiates translation of a subset of mRNAs involved in cell proliferation.</text>
</comment>
<comment type="subunit">
    <text evidence="1">Component of the eukaryotic translation initiation factor 3 (eIF-3) complex.</text>
</comment>
<comment type="subcellular location">
    <subcellularLocation>
        <location evidence="1">Cytoplasm</location>
    </subcellularLocation>
</comment>
<comment type="similarity">
    <text evidence="1">Belongs to the eIF-3 subunit C family.</text>
</comment>
<evidence type="ECO:0000255" key="1">
    <source>
        <dbReference type="HAMAP-Rule" id="MF_03002"/>
    </source>
</evidence>
<evidence type="ECO:0000255" key="2">
    <source>
        <dbReference type="PROSITE-ProRule" id="PRU01185"/>
    </source>
</evidence>
<evidence type="ECO:0000256" key="3">
    <source>
        <dbReference type="SAM" id="MobiDB-lite"/>
    </source>
</evidence>
<name>EIF3C_CHAGB</name>
<feature type="chain" id="PRO_0000364280" description="Eukaryotic translation initiation factor 3 subunit C">
    <location>
        <begin position="1"/>
        <end position="863"/>
    </location>
</feature>
<feature type="domain" description="PCI" evidence="2">
    <location>
        <begin position="604"/>
        <end position="778"/>
    </location>
</feature>
<feature type="region of interest" description="Disordered" evidence="3">
    <location>
        <begin position="1"/>
        <end position="92"/>
    </location>
</feature>
<feature type="region of interest" description="Disordered" evidence="3">
    <location>
        <begin position="808"/>
        <end position="863"/>
    </location>
</feature>
<feature type="compositionally biased region" description="Acidic residues" evidence="3">
    <location>
        <begin position="16"/>
        <end position="53"/>
    </location>
</feature>
<feature type="compositionally biased region" description="Basic and acidic residues" evidence="3">
    <location>
        <begin position="79"/>
        <end position="92"/>
    </location>
</feature>
<feature type="compositionally biased region" description="Gly residues" evidence="3">
    <location>
        <begin position="822"/>
        <end position="839"/>
    </location>
</feature>
<feature type="compositionally biased region" description="Low complexity" evidence="3">
    <location>
        <begin position="840"/>
        <end position="850"/>
    </location>
</feature>
<accession>Q2H731</accession>
<proteinExistence type="inferred from homology"/>
<reference key="1">
    <citation type="journal article" date="2015" name="Genome Announc.">
        <title>Draft genome sequence of the cellulolytic fungus Chaetomium globosum.</title>
        <authorList>
            <person name="Cuomo C.A."/>
            <person name="Untereiner W.A."/>
            <person name="Ma L.-J."/>
            <person name="Grabherr M."/>
            <person name="Birren B.W."/>
        </authorList>
    </citation>
    <scope>NUCLEOTIDE SEQUENCE [LARGE SCALE GENOMIC DNA]</scope>
    <source>
        <strain>ATCC 6205 / CBS 148.51 / DSM 1962 / NBRC 6347 / NRRL 1970</strain>
    </source>
</reference>
<gene>
    <name evidence="1" type="primary">NIP1</name>
    <name type="ORF">CHGG_05534</name>
</gene>
<sequence length="863" mass="97115">MSRFFRGGDDSSSESSSDEEELYSTSEEEEEEDQDQEESSEEEDEEESSDEDEGPKKTGLSRFLVDQASSDSEGSDEEGATKVKSAKDKRFDELEATITTIQNRQKIDDWGSIANEFDKLNRQVVKLQDGGKAPKSYIKCIAELEDFLNETLAKQKVTPKNKKLNATNARGLNAVKQRIKKNNKDYQAQIDAFRKDSDDFMESDEEEVPAPKTKVRFQEAAAPEEAAEDEDKGFARVDKRGKAIPFSPESIQKHLRAIVESRGRKNTDRGEQIKIMEELNKVAETPYLKIRVLQTLVSARFDLGSGTTTSMPLDHWKAAERELAALLTLLETHKDHVVIEGAEEWEDDDKTPILGPDDKYIKVPGSVVSYIERLDDELTRSLQSIDPHTSEYIERLTDEASLYNIILQGLLYYETIRKDASLEIPQESLNRIIQRRLDHVYFKPAQVVKILEENAWKQVSSGVDSAITPRGASGDAGKLMYTLCNYLFDNSEGIIRARAMLSQIYFLALHDEYYKARDMMLTSHLQESIANFDVATQILYNRTLVQVGLCAFRRGLVYDAQNTLQDICGSGRQKELLAQGVMMQRYNQVTPEQERLEKQRQLPFHMHINLELLECVYLTCSMLLEIPLLAQIGSSPDIKKRVISKTYRRMLEYHERQIFTGPPENTRDHVMQASKALAAGEWKKATHFIHSIKIWDLMPSSEEIKAMLAKQIQEEGLRTYLFTYAPFYDTLAIETLSTMFELDSVKVSAVVSKMISHEELAAALDQVTKTVIFRKGVELSRLQSLALALSDKASALIETNERTLEVRTQGSANAFSRKDGRQGGQRGGGQRSGRGGARAGGNAQRQAGGTQFTGGALGAAVRG</sequence>
<organism>
    <name type="scientific">Chaetomium globosum (strain ATCC 6205 / CBS 148.51 / DSM 1962 / NBRC 6347 / NRRL 1970)</name>
    <name type="common">Soil fungus</name>
    <dbReference type="NCBI Taxonomy" id="306901"/>
    <lineage>
        <taxon>Eukaryota</taxon>
        <taxon>Fungi</taxon>
        <taxon>Dikarya</taxon>
        <taxon>Ascomycota</taxon>
        <taxon>Pezizomycotina</taxon>
        <taxon>Sordariomycetes</taxon>
        <taxon>Sordariomycetidae</taxon>
        <taxon>Sordariales</taxon>
        <taxon>Chaetomiaceae</taxon>
        <taxon>Chaetomium</taxon>
    </lineage>
</organism>
<protein>
    <recommendedName>
        <fullName evidence="1">Eukaryotic translation initiation factor 3 subunit C</fullName>
        <shortName evidence="1">eIF3c</shortName>
    </recommendedName>
    <alternativeName>
        <fullName evidence="1">Eukaryotic translation initiation factor 3 93 kDa subunit homolog</fullName>
        <shortName evidence="1">eIF3 p93</shortName>
    </alternativeName>
    <alternativeName>
        <fullName evidence="1">Translation initiation factor eIF3, p93 subunit homolog</fullName>
    </alternativeName>
</protein>